<evidence type="ECO:0000255" key="1">
    <source>
        <dbReference type="PROSITE-ProRule" id="PRU00683"/>
    </source>
</evidence>
<evidence type="ECO:0000269" key="2">
    <source>
    </source>
</evidence>
<evidence type="ECO:0000303" key="3">
    <source>
    </source>
</evidence>
<evidence type="ECO:0000305" key="4"/>
<evidence type="ECO:0000305" key="5">
    <source>
    </source>
</evidence>
<evidence type="ECO:0000312" key="6">
    <source>
        <dbReference type="EMBL" id="ABL03419.1"/>
    </source>
</evidence>
<reference key="1">
    <citation type="journal article" date="2007" name="Genome Res.">
        <title>Reductive evolution and niche adaptation inferred from the genome of Mycobacterium ulcerans, the causative agent of Buruli ulcer.</title>
        <authorList>
            <person name="Stinear T.P."/>
            <person name="Seemann T."/>
            <person name="Pidot S."/>
            <person name="Frigui W."/>
            <person name="Reysset G."/>
            <person name="Garnier T."/>
            <person name="Meurice G."/>
            <person name="Simon D."/>
            <person name="Bouchier C."/>
            <person name="Ma L."/>
            <person name="Tichit M."/>
            <person name="Porter J.L."/>
            <person name="Ryan J."/>
            <person name="Johnson P.D.R."/>
            <person name="Davies J.K."/>
            <person name="Jenkin G.A."/>
            <person name="Small P.L.C."/>
            <person name="Jones L.M."/>
            <person name="Tekaia F."/>
            <person name="Laval F."/>
            <person name="Daffe M."/>
            <person name="Parkhill J."/>
            <person name="Cole S.T."/>
        </authorList>
    </citation>
    <scope>NUCLEOTIDE SEQUENCE [LARGE SCALE GENOMIC DNA]</scope>
    <source>
        <strain>Agy99</strain>
    </source>
</reference>
<reference key="2">
    <citation type="journal article" date="2019" name="J. Am. Chem. Soc.">
        <title>MftD Catalyzes the Formation of a Biologically Active Redox Center in the Biosynthesis of the Ribosomally Synthesized and Post-translationally Modified Redox Cofactor Mycofactocin.</title>
        <authorList>
            <person name="Ayikpoe R.S."/>
            <person name="Latham J.A."/>
        </authorList>
    </citation>
    <scope>FUNCTION</scope>
    <scope>CATALYTIC ACTIVITY</scope>
    <scope>COFACTOR</scope>
    <source>
        <strain>Agy99</strain>
    </source>
</reference>
<dbReference type="EC" id="1.4.3.26" evidence="2"/>
<dbReference type="EMBL" id="CP000325">
    <property type="protein sequence ID" value="ABL03419.1"/>
    <property type="molecule type" value="Genomic_DNA"/>
</dbReference>
<dbReference type="RefSeq" id="WP_011739044.1">
    <property type="nucleotide sequence ID" value="NC_008611.1"/>
</dbReference>
<dbReference type="SMR" id="A0PM50"/>
<dbReference type="KEGG" id="mul:MUL_0774"/>
<dbReference type="eggNOG" id="COG1304">
    <property type="taxonomic scope" value="Bacteria"/>
</dbReference>
<dbReference type="HOGENOM" id="CLU_020639_0_0_11"/>
<dbReference type="BioCyc" id="MetaCyc:MONOMER-21116"/>
<dbReference type="BRENDA" id="1.4.3.26">
    <property type="organism ID" value="8016"/>
</dbReference>
<dbReference type="Proteomes" id="UP000000765">
    <property type="component" value="Chromosome"/>
</dbReference>
<dbReference type="GO" id="GO:0010181">
    <property type="term" value="F:FMN binding"/>
    <property type="evidence" value="ECO:0007669"/>
    <property type="project" value="InterPro"/>
</dbReference>
<dbReference type="GO" id="GO:0016491">
    <property type="term" value="F:oxidoreductase activity"/>
    <property type="evidence" value="ECO:0007669"/>
    <property type="project" value="UniProtKB-KW"/>
</dbReference>
<dbReference type="GO" id="GO:0140604">
    <property type="term" value="P:mycofactocin biosynthetic process"/>
    <property type="evidence" value="ECO:0000314"/>
    <property type="project" value="UniProtKB"/>
</dbReference>
<dbReference type="CDD" id="cd02809">
    <property type="entry name" value="alpha_hydroxyacid_oxid_FMN"/>
    <property type="match status" value="1"/>
</dbReference>
<dbReference type="FunFam" id="3.20.20.70:FF:000203">
    <property type="entry name" value="Mycofactocin system heme/flavin oxidoreductase MftD"/>
    <property type="match status" value="1"/>
</dbReference>
<dbReference type="Gene3D" id="3.20.20.70">
    <property type="entry name" value="Aldolase class I"/>
    <property type="match status" value="1"/>
</dbReference>
<dbReference type="InterPro" id="IPR013785">
    <property type="entry name" value="Aldolase_TIM"/>
</dbReference>
<dbReference type="InterPro" id="IPR012133">
    <property type="entry name" value="Alpha-hydoxy_acid_DH_FMN"/>
</dbReference>
<dbReference type="InterPro" id="IPR000262">
    <property type="entry name" value="FMN-dep_DH"/>
</dbReference>
<dbReference type="InterPro" id="IPR037396">
    <property type="entry name" value="FMN_HAD"/>
</dbReference>
<dbReference type="InterPro" id="IPR023989">
    <property type="entry name" value="MftD"/>
</dbReference>
<dbReference type="NCBIfam" id="TIGR03966">
    <property type="entry name" value="actino_HemFlav"/>
    <property type="match status" value="1"/>
</dbReference>
<dbReference type="PANTHER" id="PTHR10578:SF107">
    <property type="entry name" value="2-HYDROXYACID OXIDASE 1"/>
    <property type="match status" value="1"/>
</dbReference>
<dbReference type="PANTHER" id="PTHR10578">
    <property type="entry name" value="S -2-HYDROXY-ACID OXIDASE-RELATED"/>
    <property type="match status" value="1"/>
</dbReference>
<dbReference type="Pfam" id="PF01070">
    <property type="entry name" value="FMN_dh"/>
    <property type="match status" value="1"/>
</dbReference>
<dbReference type="PIRSF" id="PIRSF000138">
    <property type="entry name" value="Al-hdrx_acd_dh"/>
    <property type="match status" value="1"/>
</dbReference>
<dbReference type="SUPFAM" id="SSF51395">
    <property type="entry name" value="FMN-linked oxidoreductases"/>
    <property type="match status" value="1"/>
</dbReference>
<dbReference type="PROSITE" id="PS51349">
    <property type="entry name" value="FMN_HYDROXY_ACID_DH_2"/>
    <property type="match status" value="1"/>
</dbReference>
<protein>
    <recommendedName>
        <fullName evidence="5">Pre-mycofactocin synthase</fullName>
        <shortName evidence="5">PMFT synthase</shortName>
        <ecNumber evidence="2">1.4.3.26</ecNumber>
    </recommendedName>
</protein>
<organism>
    <name type="scientific">Mycobacterium ulcerans (strain Agy99)</name>
    <dbReference type="NCBI Taxonomy" id="362242"/>
    <lineage>
        <taxon>Bacteria</taxon>
        <taxon>Bacillati</taxon>
        <taxon>Actinomycetota</taxon>
        <taxon>Actinomycetes</taxon>
        <taxon>Mycobacteriales</taxon>
        <taxon>Mycobacteriaceae</taxon>
        <taxon>Mycobacterium</taxon>
        <taxon>Mycobacterium ulcerans group</taxon>
    </lineage>
</organism>
<comment type="function">
    <text evidence="2">Involved in the biosynthesis of the enzyme cofactor mycofactocin (MFT). Catalyzes the oxidative deamination of AHDP (3-amino-5-[(4-hydroxyphenyl)methyl]-4,4-dimethyl-2-pyrrolidin-2-one), forming an alpha-keto amide moiety on the resulting molecule, which is called pre-mycofactocin (PMFT). This reaction occurs via a 5-[(4-hydroxyphenyl)methyl]-3-imino-4,4-dimethylpyrrolidin-2-one intermediate, which converts to PMFT. The alpha-keto amide moiety is the redox-active center for the redox activity of mycofactocin.</text>
</comment>
<comment type="catalytic activity">
    <reaction evidence="2">
        <text>3-amino-5-[(4-hydroxyphenyl)methyl]-4,4-dimethyl-2-pyrrolidin-2-one + O2 + H2O = pre-mycofactocin + H2O2 + NH4(+)</text>
        <dbReference type="Rhea" id="RHEA:65508"/>
        <dbReference type="ChEBI" id="CHEBI:15377"/>
        <dbReference type="ChEBI" id="CHEBI:15379"/>
        <dbReference type="ChEBI" id="CHEBI:16240"/>
        <dbReference type="ChEBI" id="CHEBI:28938"/>
        <dbReference type="ChEBI" id="CHEBI:150862"/>
        <dbReference type="ChEBI" id="CHEBI:150863"/>
        <dbReference type="EC" id="1.4.3.26"/>
    </reaction>
</comment>
<comment type="cofactor">
    <cofactor evidence="2">
        <name>FMN</name>
        <dbReference type="ChEBI" id="CHEBI:58210"/>
    </cofactor>
</comment>
<comment type="similarity">
    <text evidence="4">Belongs to the FMN-dependent alpha-hydroxy acid dehydrogenase family.</text>
</comment>
<accession>A0PM50</accession>
<name>MFTD_MYCUA</name>
<sequence>MADEWFETVAIAQQRAKRRLPKSVYSSLISASEKGITVADNVAAFSELGFAPHVIGAAEKRDMSTTVMGQDISMPVLISPTGVQAVHPDGEVAVARAAAARGTAMGLSSFASKTIEDVIAANPKIFFQIYWLGGRDAIAERVERARQAGAVGLIVTTDWTFSHGRDWGSPKIPEQMNLRTILRLSPEAIVRPRWLWKFGKTLRPPDLRVPNQGRRGEPGPAFFAAYGEWMGTPPPTWDDIAWLRELWGGPFMLKGVMRVDDAKRAVDAGVSAISVSNHGGNNLDGTPASIRALPAVAAAVGDQVEVLLDGGIRRGSDVVKAVALGARAVLVGRAYLWGLAANGQAGVENVLDILRGGIDSALMGLGHSSIHDLRSDDILIPADFVRRLGR</sequence>
<gene>
    <name evidence="3" type="primary">mftD</name>
    <name evidence="6" type="synonym">lldD1</name>
    <name evidence="6" type="ordered locus">MUL_0774</name>
</gene>
<proteinExistence type="evidence at protein level"/>
<feature type="chain" id="PRO_0000452054" description="Pre-mycofactocin synthase">
    <location>
        <begin position="1"/>
        <end position="390"/>
    </location>
</feature>
<feature type="domain" description="FMN hydroxy acid dehydrogenase" evidence="1">
    <location>
        <begin position="1"/>
        <end position="383"/>
    </location>
</feature>
<feature type="active site" description="Proton acceptor" evidence="1">
    <location>
        <position position="278"/>
    </location>
</feature>
<feature type="binding site" evidence="1">
    <location>
        <position position="108"/>
    </location>
    <ligand>
        <name>FMN</name>
        <dbReference type="ChEBI" id="CHEBI:58210"/>
    </ligand>
</feature>
<feature type="binding site" evidence="1">
    <location>
        <position position="128"/>
    </location>
    <ligand>
        <name>FMN</name>
        <dbReference type="ChEBI" id="CHEBI:58210"/>
    </ligand>
</feature>
<feature type="binding site" evidence="1">
    <location>
        <position position="156"/>
    </location>
    <ligand>
        <name>FMN</name>
        <dbReference type="ChEBI" id="CHEBI:58210"/>
    </ligand>
</feature>
<feature type="binding site" evidence="1">
    <location>
        <position position="254"/>
    </location>
    <ligand>
        <name>FMN</name>
        <dbReference type="ChEBI" id="CHEBI:58210"/>
    </ligand>
</feature>
<feature type="binding site" evidence="1">
    <location>
        <begin position="309"/>
        <end position="313"/>
    </location>
    <ligand>
        <name>FMN</name>
        <dbReference type="ChEBI" id="CHEBI:58210"/>
    </ligand>
</feature>
<feature type="binding site" evidence="1">
    <location>
        <begin position="332"/>
        <end position="333"/>
    </location>
    <ligand>
        <name>FMN</name>
        <dbReference type="ChEBI" id="CHEBI:58210"/>
    </ligand>
</feature>
<keyword id="KW-0285">Flavoprotein</keyword>
<keyword id="KW-0288">FMN</keyword>
<keyword id="KW-0560">Oxidoreductase</keyword>